<reference key="1">
    <citation type="submission" date="2006-12" db="EMBL/GenBank/DDBJ databases">
        <title>Bifidobacterium adolescentis complete genome sequence.</title>
        <authorList>
            <person name="Suzuki T."/>
            <person name="Tsuda Y."/>
            <person name="Kanou N."/>
            <person name="Inoue T."/>
            <person name="Kumazaki K."/>
            <person name="Nagano S."/>
            <person name="Hirai S."/>
            <person name="Tanaka K."/>
            <person name="Watanabe K."/>
        </authorList>
    </citation>
    <scope>NUCLEOTIDE SEQUENCE [LARGE SCALE GENOMIC DNA]</scope>
    <source>
        <strain>ATCC 15703 / DSM 20083 / NCTC 11814 / E194a</strain>
    </source>
</reference>
<organism>
    <name type="scientific">Bifidobacterium adolescentis (strain ATCC 15703 / DSM 20083 / NCTC 11814 / E194a)</name>
    <dbReference type="NCBI Taxonomy" id="367928"/>
    <lineage>
        <taxon>Bacteria</taxon>
        <taxon>Bacillati</taxon>
        <taxon>Actinomycetota</taxon>
        <taxon>Actinomycetes</taxon>
        <taxon>Bifidobacteriales</taxon>
        <taxon>Bifidobacteriaceae</taxon>
        <taxon>Bifidobacterium</taxon>
    </lineage>
</organism>
<proteinExistence type="inferred from homology"/>
<dbReference type="EC" id="4.2.1.11" evidence="1"/>
<dbReference type="EMBL" id="AP009256">
    <property type="protein sequence ID" value="BAF39426.1"/>
    <property type="molecule type" value="Genomic_DNA"/>
</dbReference>
<dbReference type="RefSeq" id="WP_003808948.1">
    <property type="nucleotide sequence ID" value="NZ_CAXVNC010000001.1"/>
</dbReference>
<dbReference type="SMR" id="A1A143"/>
<dbReference type="STRING" id="367928.BAD_0645"/>
<dbReference type="PaxDb" id="1680-BADO_0689"/>
<dbReference type="GeneID" id="4556269"/>
<dbReference type="KEGG" id="bad:BAD_0645"/>
<dbReference type="HOGENOM" id="CLU_031223_2_1_11"/>
<dbReference type="UniPathway" id="UPA00109">
    <property type="reaction ID" value="UER00187"/>
</dbReference>
<dbReference type="Proteomes" id="UP000008702">
    <property type="component" value="Chromosome"/>
</dbReference>
<dbReference type="GO" id="GO:0009986">
    <property type="term" value="C:cell surface"/>
    <property type="evidence" value="ECO:0007669"/>
    <property type="project" value="UniProtKB-SubCell"/>
</dbReference>
<dbReference type="GO" id="GO:0005576">
    <property type="term" value="C:extracellular region"/>
    <property type="evidence" value="ECO:0007669"/>
    <property type="project" value="UniProtKB-SubCell"/>
</dbReference>
<dbReference type="GO" id="GO:0000015">
    <property type="term" value="C:phosphopyruvate hydratase complex"/>
    <property type="evidence" value="ECO:0007669"/>
    <property type="project" value="InterPro"/>
</dbReference>
<dbReference type="GO" id="GO:0000287">
    <property type="term" value="F:magnesium ion binding"/>
    <property type="evidence" value="ECO:0007669"/>
    <property type="project" value="UniProtKB-UniRule"/>
</dbReference>
<dbReference type="GO" id="GO:0004634">
    <property type="term" value="F:phosphopyruvate hydratase activity"/>
    <property type="evidence" value="ECO:0007669"/>
    <property type="project" value="UniProtKB-UniRule"/>
</dbReference>
<dbReference type="GO" id="GO:0006096">
    <property type="term" value="P:glycolytic process"/>
    <property type="evidence" value="ECO:0007669"/>
    <property type="project" value="UniProtKB-UniRule"/>
</dbReference>
<dbReference type="CDD" id="cd03313">
    <property type="entry name" value="enolase"/>
    <property type="match status" value="1"/>
</dbReference>
<dbReference type="FunFam" id="3.20.20.120:FF:000001">
    <property type="entry name" value="Enolase"/>
    <property type="match status" value="1"/>
</dbReference>
<dbReference type="FunFam" id="3.30.390.10:FF:000001">
    <property type="entry name" value="Enolase"/>
    <property type="match status" value="1"/>
</dbReference>
<dbReference type="Gene3D" id="3.20.20.120">
    <property type="entry name" value="Enolase-like C-terminal domain"/>
    <property type="match status" value="1"/>
</dbReference>
<dbReference type="Gene3D" id="3.30.390.10">
    <property type="entry name" value="Enolase-like, N-terminal domain"/>
    <property type="match status" value="1"/>
</dbReference>
<dbReference type="HAMAP" id="MF_00318">
    <property type="entry name" value="Enolase"/>
    <property type="match status" value="1"/>
</dbReference>
<dbReference type="InterPro" id="IPR000941">
    <property type="entry name" value="Enolase"/>
</dbReference>
<dbReference type="InterPro" id="IPR036849">
    <property type="entry name" value="Enolase-like_C_sf"/>
</dbReference>
<dbReference type="InterPro" id="IPR029017">
    <property type="entry name" value="Enolase-like_N"/>
</dbReference>
<dbReference type="InterPro" id="IPR020810">
    <property type="entry name" value="Enolase_C"/>
</dbReference>
<dbReference type="InterPro" id="IPR020809">
    <property type="entry name" value="Enolase_CS"/>
</dbReference>
<dbReference type="InterPro" id="IPR020811">
    <property type="entry name" value="Enolase_N"/>
</dbReference>
<dbReference type="NCBIfam" id="TIGR01060">
    <property type="entry name" value="eno"/>
    <property type="match status" value="1"/>
</dbReference>
<dbReference type="PANTHER" id="PTHR11902">
    <property type="entry name" value="ENOLASE"/>
    <property type="match status" value="1"/>
</dbReference>
<dbReference type="PANTHER" id="PTHR11902:SF1">
    <property type="entry name" value="ENOLASE"/>
    <property type="match status" value="1"/>
</dbReference>
<dbReference type="Pfam" id="PF00113">
    <property type="entry name" value="Enolase_C"/>
    <property type="match status" value="1"/>
</dbReference>
<dbReference type="Pfam" id="PF03952">
    <property type="entry name" value="Enolase_N"/>
    <property type="match status" value="1"/>
</dbReference>
<dbReference type="PIRSF" id="PIRSF001400">
    <property type="entry name" value="Enolase"/>
    <property type="match status" value="1"/>
</dbReference>
<dbReference type="PRINTS" id="PR00148">
    <property type="entry name" value="ENOLASE"/>
</dbReference>
<dbReference type="SFLD" id="SFLDS00001">
    <property type="entry name" value="Enolase"/>
    <property type="match status" value="1"/>
</dbReference>
<dbReference type="SFLD" id="SFLDF00002">
    <property type="entry name" value="enolase"/>
    <property type="match status" value="1"/>
</dbReference>
<dbReference type="SMART" id="SM01192">
    <property type="entry name" value="Enolase_C"/>
    <property type="match status" value="1"/>
</dbReference>
<dbReference type="SMART" id="SM01193">
    <property type="entry name" value="Enolase_N"/>
    <property type="match status" value="1"/>
</dbReference>
<dbReference type="SUPFAM" id="SSF51604">
    <property type="entry name" value="Enolase C-terminal domain-like"/>
    <property type="match status" value="1"/>
</dbReference>
<dbReference type="SUPFAM" id="SSF54826">
    <property type="entry name" value="Enolase N-terminal domain-like"/>
    <property type="match status" value="1"/>
</dbReference>
<dbReference type="PROSITE" id="PS00164">
    <property type="entry name" value="ENOLASE"/>
    <property type="match status" value="1"/>
</dbReference>
<gene>
    <name evidence="1" type="primary">eno</name>
    <name type="ordered locus">BAD_0645</name>
</gene>
<name>ENO_BIFAA</name>
<keyword id="KW-0963">Cytoplasm</keyword>
<keyword id="KW-0324">Glycolysis</keyword>
<keyword id="KW-0456">Lyase</keyword>
<keyword id="KW-0460">Magnesium</keyword>
<keyword id="KW-0479">Metal-binding</keyword>
<keyword id="KW-1185">Reference proteome</keyword>
<keyword id="KW-0964">Secreted</keyword>
<accession>A1A143</accession>
<feature type="chain" id="PRO_0000280836" description="Enolase">
    <location>
        <begin position="1"/>
        <end position="432"/>
    </location>
</feature>
<feature type="active site" description="Proton donor" evidence="1">
    <location>
        <position position="205"/>
    </location>
</feature>
<feature type="active site" description="Proton acceptor" evidence="1">
    <location>
        <position position="337"/>
    </location>
</feature>
<feature type="binding site" evidence="1">
    <location>
        <position position="163"/>
    </location>
    <ligand>
        <name>(2R)-2-phosphoglycerate</name>
        <dbReference type="ChEBI" id="CHEBI:58289"/>
    </ligand>
</feature>
<feature type="binding site" evidence="1">
    <location>
        <position position="242"/>
    </location>
    <ligand>
        <name>Mg(2+)</name>
        <dbReference type="ChEBI" id="CHEBI:18420"/>
    </ligand>
</feature>
<feature type="binding site" evidence="1">
    <location>
        <position position="285"/>
    </location>
    <ligand>
        <name>Mg(2+)</name>
        <dbReference type="ChEBI" id="CHEBI:18420"/>
    </ligand>
</feature>
<feature type="binding site" evidence="1">
    <location>
        <position position="312"/>
    </location>
    <ligand>
        <name>Mg(2+)</name>
        <dbReference type="ChEBI" id="CHEBI:18420"/>
    </ligand>
</feature>
<feature type="binding site" evidence="1">
    <location>
        <position position="337"/>
    </location>
    <ligand>
        <name>(2R)-2-phosphoglycerate</name>
        <dbReference type="ChEBI" id="CHEBI:58289"/>
    </ligand>
</feature>
<feature type="binding site" evidence="1">
    <location>
        <position position="366"/>
    </location>
    <ligand>
        <name>(2R)-2-phosphoglycerate</name>
        <dbReference type="ChEBI" id="CHEBI:58289"/>
    </ligand>
</feature>
<feature type="binding site" evidence="1">
    <location>
        <position position="367"/>
    </location>
    <ligand>
        <name>(2R)-2-phosphoglycerate</name>
        <dbReference type="ChEBI" id="CHEBI:58289"/>
    </ligand>
</feature>
<feature type="binding site" evidence="1">
    <location>
        <position position="388"/>
    </location>
    <ligand>
        <name>(2R)-2-phosphoglycerate</name>
        <dbReference type="ChEBI" id="CHEBI:58289"/>
    </ligand>
</feature>
<evidence type="ECO:0000255" key="1">
    <source>
        <dbReference type="HAMAP-Rule" id="MF_00318"/>
    </source>
</evidence>
<protein>
    <recommendedName>
        <fullName evidence="1">Enolase</fullName>
        <ecNumber evidence="1">4.2.1.11</ecNumber>
    </recommendedName>
    <alternativeName>
        <fullName evidence="1">2-phospho-D-glycerate hydro-lyase</fullName>
    </alternativeName>
    <alternativeName>
        <fullName evidence="1">2-phosphoglycerate dehydratase</fullName>
    </alternativeName>
</protein>
<sequence length="432" mass="46481">MAVIESVYARQILDSRGNPTVEVVLDTDDGAQGLGLVPSGASTGEAEAWERRDGDKSVYQGKGVLNAVKAVNEEIAPKVIGMDASDQRALDETMIELDGTPNKGRLGANAILGVSLAALYASAESADQPLYRYIGGTNGHILPVPNMNIMNGGAHADFATDIQEYMISPYGFNTYSEALQAGVEVYHTLKNVLKKQGLNTGLGDEGGFAPKMKSNKDSLNYIMDAISAAGYEPGKQIGISLDVASSEFYNKETGKYHFEGDDREAGYMLDFYENLINEYPIVSIEDPFQEEGWDDWAAITAKLGDRLQFVGDDLLVTNPARLAKGIKLGAANSLLVKLNQIGTVTETLDAIELATKNGFTSMVSHRSGETPDTTISDLAVAKNTGQIKTGAPARGERIAKYNRLLEIEEELGSTAQYAGYSAFKACKKYIAE</sequence>
<comment type="function">
    <text evidence="1">Catalyzes the reversible conversion of 2-phosphoglycerate (2-PG) into phosphoenolpyruvate (PEP). It is essential for the degradation of carbohydrates via glycolysis.</text>
</comment>
<comment type="catalytic activity">
    <reaction evidence="1">
        <text>(2R)-2-phosphoglycerate = phosphoenolpyruvate + H2O</text>
        <dbReference type="Rhea" id="RHEA:10164"/>
        <dbReference type="ChEBI" id="CHEBI:15377"/>
        <dbReference type="ChEBI" id="CHEBI:58289"/>
        <dbReference type="ChEBI" id="CHEBI:58702"/>
        <dbReference type="EC" id="4.2.1.11"/>
    </reaction>
</comment>
<comment type="cofactor">
    <cofactor evidence="1">
        <name>Mg(2+)</name>
        <dbReference type="ChEBI" id="CHEBI:18420"/>
    </cofactor>
    <text evidence="1">Binds a second Mg(2+) ion via substrate during catalysis.</text>
</comment>
<comment type="pathway">
    <text evidence="1">Carbohydrate degradation; glycolysis; pyruvate from D-glyceraldehyde 3-phosphate: step 4/5.</text>
</comment>
<comment type="subcellular location">
    <subcellularLocation>
        <location evidence="1">Cytoplasm</location>
    </subcellularLocation>
    <subcellularLocation>
        <location evidence="1">Secreted</location>
    </subcellularLocation>
    <subcellularLocation>
        <location evidence="1">Cell surface</location>
    </subcellularLocation>
    <text evidence="1">Fractions of enolase are present in both the cytoplasm and on the cell surface.</text>
</comment>
<comment type="similarity">
    <text evidence="1">Belongs to the enolase family.</text>
</comment>